<comment type="function">
    <text evidence="1">Involved in the modulation of the specificity of the ClpAP-mediated ATP-dependent protein degradation.</text>
</comment>
<comment type="subunit">
    <text evidence="1">Binds to the N-terminal domain of the chaperone ClpA.</text>
</comment>
<comment type="similarity">
    <text evidence="1">Belongs to the ClpS family.</text>
</comment>
<organism>
    <name type="scientific">Campylobacter jejuni (strain RM1221)</name>
    <dbReference type="NCBI Taxonomy" id="195099"/>
    <lineage>
        <taxon>Bacteria</taxon>
        <taxon>Pseudomonadati</taxon>
        <taxon>Campylobacterota</taxon>
        <taxon>Epsilonproteobacteria</taxon>
        <taxon>Campylobacterales</taxon>
        <taxon>Campylobacteraceae</taxon>
        <taxon>Campylobacter</taxon>
    </lineage>
</organism>
<name>CLPS_CAMJR</name>
<accession>Q5HTZ7</accession>
<sequence>MPKTQTLEQTKLSEPKMYKVILLNDDVTTMDFVIEILMNIFHQNLEKASQTMLEIHHNGSGICGIYTQEIALSKQKKVMDAAKLANFPLQAKVEEE</sequence>
<gene>
    <name evidence="1" type="primary">clpS</name>
    <name type="ordered locus">CJE1250</name>
</gene>
<evidence type="ECO:0000255" key="1">
    <source>
        <dbReference type="HAMAP-Rule" id="MF_00302"/>
    </source>
</evidence>
<protein>
    <recommendedName>
        <fullName evidence="1">ATP-dependent Clp protease adapter protein ClpS</fullName>
    </recommendedName>
</protein>
<feature type="chain" id="PRO_0000215697" description="ATP-dependent Clp protease adapter protein ClpS">
    <location>
        <begin position="1"/>
        <end position="96"/>
    </location>
</feature>
<proteinExistence type="inferred from homology"/>
<reference key="1">
    <citation type="journal article" date="2005" name="PLoS Biol.">
        <title>Major structural differences and novel potential virulence mechanisms from the genomes of multiple Campylobacter species.</title>
        <authorList>
            <person name="Fouts D.E."/>
            <person name="Mongodin E.F."/>
            <person name="Mandrell R.E."/>
            <person name="Miller W.G."/>
            <person name="Rasko D.A."/>
            <person name="Ravel J."/>
            <person name="Brinkac L.M."/>
            <person name="DeBoy R.T."/>
            <person name="Parker C.T."/>
            <person name="Daugherty S.C."/>
            <person name="Dodson R.J."/>
            <person name="Durkin A.S."/>
            <person name="Madupu R."/>
            <person name="Sullivan S.A."/>
            <person name="Shetty J.U."/>
            <person name="Ayodeji M.A."/>
            <person name="Shvartsbeyn A."/>
            <person name="Schatz M.C."/>
            <person name="Badger J.H."/>
            <person name="Fraser C.M."/>
            <person name="Nelson K.E."/>
        </authorList>
    </citation>
    <scope>NUCLEOTIDE SEQUENCE [LARGE SCALE GENOMIC DNA]</scope>
    <source>
        <strain>RM1221</strain>
    </source>
</reference>
<dbReference type="EMBL" id="CP000025">
    <property type="protein sequence ID" value="AAW35572.1"/>
    <property type="molecule type" value="Genomic_DNA"/>
</dbReference>
<dbReference type="RefSeq" id="WP_002852892.1">
    <property type="nucleotide sequence ID" value="NC_003912.7"/>
</dbReference>
<dbReference type="SMR" id="Q5HTZ7"/>
<dbReference type="KEGG" id="cjr:CJE1250"/>
<dbReference type="HOGENOM" id="CLU_134358_1_0_7"/>
<dbReference type="GO" id="GO:0030163">
    <property type="term" value="P:protein catabolic process"/>
    <property type="evidence" value="ECO:0007669"/>
    <property type="project" value="InterPro"/>
</dbReference>
<dbReference type="GO" id="GO:0006508">
    <property type="term" value="P:proteolysis"/>
    <property type="evidence" value="ECO:0007669"/>
    <property type="project" value="UniProtKB-UniRule"/>
</dbReference>
<dbReference type="FunFam" id="3.30.1390.10:FF:000002">
    <property type="entry name" value="ATP-dependent Clp protease adapter protein ClpS"/>
    <property type="match status" value="1"/>
</dbReference>
<dbReference type="Gene3D" id="3.30.1390.10">
    <property type="match status" value="1"/>
</dbReference>
<dbReference type="HAMAP" id="MF_00302">
    <property type="entry name" value="ClpS"/>
    <property type="match status" value="1"/>
</dbReference>
<dbReference type="InterPro" id="IPR022935">
    <property type="entry name" value="ClpS"/>
</dbReference>
<dbReference type="InterPro" id="IPR003769">
    <property type="entry name" value="ClpS_core"/>
</dbReference>
<dbReference type="InterPro" id="IPR014719">
    <property type="entry name" value="Ribosomal_bL12_C/ClpS-like"/>
</dbReference>
<dbReference type="PANTHER" id="PTHR33473:SF19">
    <property type="entry name" value="ATP-DEPENDENT CLP PROTEASE ADAPTER PROTEIN CLPS"/>
    <property type="match status" value="1"/>
</dbReference>
<dbReference type="PANTHER" id="PTHR33473">
    <property type="entry name" value="ATP-DEPENDENT CLP PROTEASE ADAPTER PROTEIN CLPS1, CHLOROPLASTIC"/>
    <property type="match status" value="1"/>
</dbReference>
<dbReference type="Pfam" id="PF02617">
    <property type="entry name" value="ClpS"/>
    <property type="match status" value="1"/>
</dbReference>
<dbReference type="SUPFAM" id="SSF54736">
    <property type="entry name" value="ClpS-like"/>
    <property type="match status" value="1"/>
</dbReference>